<evidence type="ECO:0000255" key="1">
    <source>
        <dbReference type="HAMAP-Rule" id="MF_00382"/>
    </source>
</evidence>
<evidence type="ECO:0000305" key="2"/>
<geneLocation type="chloroplast"/>
<organism>
    <name type="scientific">Populus trichocarpa</name>
    <name type="common">Western balsam poplar</name>
    <name type="synonym">Populus balsamifera subsp. trichocarpa</name>
    <dbReference type="NCBI Taxonomy" id="3694"/>
    <lineage>
        <taxon>Eukaryota</taxon>
        <taxon>Viridiplantae</taxon>
        <taxon>Streptophyta</taxon>
        <taxon>Embryophyta</taxon>
        <taxon>Tracheophyta</taxon>
        <taxon>Spermatophyta</taxon>
        <taxon>Magnoliopsida</taxon>
        <taxon>eudicotyledons</taxon>
        <taxon>Gunneridae</taxon>
        <taxon>Pentapetalae</taxon>
        <taxon>rosids</taxon>
        <taxon>fabids</taxon>
        <taxon>Malpighiales</taxon>
        <taxon>Salicaceae</taxon>
        <taxon>Saliceae</taxon>
        <taxon>Populus</taxon>
    </lineage>
</organism>
<accession>A4GYT4</accession>
<name>RK20_POPTR</name>
<reference key="1">
    <citation type="journal article" date="2006" name="Science">
        <title>The genome of black cottonwood, Populus trichocarpa (Torr. &amp; Gray).</title>
        <authorList>
            <person name="Tuskan G.A."/>
            <person name="Difazio S."/>
            <person name="Jansson S."/>
            <person name="Bohlmann J."/>
            <person name="Grigoriev I."/>
            <person name="Hellsten U."/>
            <person name="Putnam N."/>
            <person name="Ralph S."/>
            <person name="Rombauts S."/>
            <person name="Salamov A."/>
            <person name="Schein J."/>
            <person name="Sterck L."/>
            <person name="Aerts A."/>
            <person name="Bhalerao R.R."/>
            <person name="Bhalerao R.P."/>
            <person name="Blaudez D."/>
            <person name="Boerjan W."/>
            <person name="Brun A."/>
            <person name="Brunner A."/>
            <person name="Busov V."/>
            <person name="Campbell M."/>
            <person name="Carlson J."/>
            <person name="Chalot M."/>
            <person name="Chapman J."/>
            <person name="Chen G.-L."/>
            <person name="Cooper D."/>
            <person name="Coutinho P.M."/>
            <person name="Couturier J."/>
            <person name="Covert S."/>
            <person name="Cronk Q."/>
            <person name="Cunningham R."/>
            <person name="Davis J."/>
            <person name="Degroeve S."/>
            <person name="Dejardin A."/>
            <person name="dePamphilis C.W."/>
            <person name="Detter J."/>
            <person name="Dirks B."/>
            <person name="Dubchak I."/>
            <person name="Duplessis S."/>
            <person name="Ehlting J."/>
            <person name="Ellis B."/>
            <person name="Gendler K."/>
            <person name="Goodstein D."/>
            <person name="Gribskov M."/>
            <person name="Grimwood J."/>
            <person name="Groover A."/>
            <person name="Gunter L."/>
            <person name="Hamberger B."/>
            <person name="Heinze B."/>
            <person name="Helariutta Y."/>
            <person name="Henrissat B."/>
            <person name="Holligan D."/>
            <person name="Holt R."/>
            <person name="Huang W."/>
            <person name="Islam-Faridi N."/>
            <person name="Jones S."/>
            <person name="Jones-Rhoades M."/>
            <person name="Jorgensen R."/>
            <person name="Joshi C."/>
            <person name="Kangasjaervi J."/>
            <person name="Karlsson J."/>
            <person name="Kelleher C."/>
            <person name="Kirkpatrick R."/>
            <person name="Kirst M."/>
            <person name="Kohler A."/>
            <person name="Kalluri U."/>
            <person name="Larimer F."/>
            <person name="Leebens-Mack J."/>
            <person name="Leple J.-C."/>
            <person name="Locascio P."/>
            <person name="Lou Y."/>
            <person name="Lucas S."/>
            <person name="Martin F."/>
            <person name="Montanini B."/>
            <person name="Napoli C."/>
            <person name="Nelson D.R."/>
            <person name="Nelson C."/>
            <person name="Nieminen K."/>
            <person name="Nilsson O."/>
            <person name="Pereda V."/>
            <person name="Peter G."/>
            <person name="Philippe R."/>
            <person name="Pilate G."/>
            <person name="Poliakov A."/>
            <person name="Razumovskaya J."/>
            <person name="Richardson P."/>
            <person name="Rinaldi C."/>
            <person name="Ritland K."/>
            <person name="Rouze P."/>
            <person name="Ryaboy D."/>
            <person name="Schmutz J."/>
            <person name="Schrader J."/>
            <person name="Segerman B."/>
            <person name="Shin H."/>
            <person name="Siddiqui A."/>
            <person name="Sterky F."/>
            <person name="Terry A."/>
            <person name="Tsai C.-J."/>
            <person name="Uberbacher E."/>
            <person name="Unneberg P."/>
            <person name="Vahala J."/>
            <person name="Wall K."/>
            <person name="Wessler S."/>
            <person name="Yang G."/>
            <person name="Yin T."/>
            <person name="Douglas C."/>
            <person name="Marra M."/>
            <person name="Sandberg G."/>
            <person name="Van de Peer Y."/>
            <person name="Rokhsar D.S."/>
        </authorList>
    </citation>
    <scope>NUCLEOTIDE SEQUENCE [LARGE SCALE GENOMIC DNA]</scope>
    <source>
        <strain>cv. Nisqually</strain>
    </source>
</reference>
<comment type="function">
    <text evidence="1">Binds directly to 23S ribosomal RNA and is necessary for the in vitro assembly process of the 50S ribosomal subunit. It is not involved in the protein synthesizing functions of that subunit.</text>
</comment>
<comment type="subcellular location">
    <subcellularLocation>
        <location>Plastid</location>
        <location>Chloroplast</location>
    </subcellularLocation>
</comment>
<comment type="similarity">
    <text evidence="1">Belongs to the bacterial ribosomal protein bL20 family.</text>
</comment>
<proteinExistence type="inferred from homology"/>
<gene>
    <name evidence="1" type="primary">rpl20</name>
    <name type="ordered locus">Poptr_cp046</name>
</gene>
<keyword id="KW-0150">Chloroplast</keyword>
<keyword id="KW-0934">Plastid</keyword>
<keyword id="KW-1185">Reference proteome</keyword>
<keyword id="KW-0687">Ribonucleoprotein</keyword>
<keyword id="KW-0689">Ribosomal protein</keyword>
<keyword id="KW-0694">RNA-binding</keyword>
<keyword id="KW-0699">rRNA-binding</keyword>
<dbReference type="EMBL" id="EF489041">
    <property type="protein sequence ID" value="ABO36728.1"/>
    <property type="molecule type" value="Genomic_DNA"/>
</dbReference>
<dbReference type="RefSeq" id="YP_001109525.1">
    <property type="nucleotide sequence ID" value="NC_009143.1"/>
</dbReference>
<dbReference type="SMR" id="A4GYT4"/>
<dbReference type="FunCoup" id="A4GYT4">
    <property type="interactions" value="65"/>
</dbReference>
<dbReference type="STRING" id="3694.A4GYT4"/>
<dbReference type="GeneID" id="4929695"/>
<dbReference type="KEGG" id="pop:4929695"/>
<dbReference type="InParanoid" id="A4GYT4"/>
<dbReference type="OrthoDB" id="10251781at2759"/>
<dbReference type="Proteomes" id="UP000006729">
    <property type="component" value="Chloroplast"/>
</dbReference>
<dbReference type="GO" id="GO:0009507">
    <property type="term" value="C:chloroplast"/>
    <property type="evidence" value="ECO:0007669"/>
    <property type="project" value="UniProtKB-SubCell"/>
</dbReference>
<dbReference type="GO" id="GO:1990904">
    <property type="term" value="C:ribonucleoprotein complex"/>
    <property type="evidence" value="ECO:0007669"/>
    <property type="project" value="UniProtKB-KW"/>
</dbReference>
<dbReference type="GO" id="GO:0005840">
    <property type="term" value="C:ribosome"/>
    <property type="evidence" value="ECO:0007669"/>
    <property type="project" value="UniProtKB-KW"/>
</dbReference>
<dbReference type="GO" id="GO:0019843">
    <property type="term" value="F:rRNA binding"/>
    <property type="evidence" value="ECO:0007669"/>
    <property type="project" value="UniProtKB-UniRule"/>
</dbReference>
<dbReference type="GO" id="GO:0003735">
    <property type="term" value="F:structural constituent of ribosome"/>
    <property type="evidence" value="ECO:0000318"/>
    <property type="project" value="GO_Central"/>
</dbReference>
<dbReference type="GO" id="GO:0000027">
    <property type="term" value="P:ribosomal large subunit assembly"/>
    <property type="evidence" value="ECO:0007669"/>
    <property type="project" value="UniProtKB-UniRule"/>
</dbReference>
<dbReference type="GO" id="GO:0006412">
    <property type="term" value="P:translation"/>
    <property type="evidence" value="ECO:0007669"/>
    <property type="project" value="InterPro"/>
</dbReference>
<dbReference type="CDD" id="cd07026">
    <property type="entry name" value="Ribosomal_L20"/>
    <property type="match status" value="1"/>
</dbReference>
<dbReference type="FunFam" id="1.10.1900.20:FF:000001">
    <property type="entry name" value="50S ribosomal protein L20"/>
    <property type="match status" value="1"/>
</dbReference>
<dbReference type="Gene3D" id="6.10.160.10">
    <property type="match status" value="1"/>
</dbReference>
<dbReference type="Gene3D" id="1.10.1900.20">
    <property type="entry name" value="Ribosomal protein L20"/>
    <property type="match status" value="1"/>
</dbReference>
<dbReference type="HAMAP" id="MF_00382">
    <property type="entry name" value="Ribosomal_bL20"/>
    <property type="match status" value="1"/>
</dbReference>
<dbReference type="InterPro" id="IPR005813">
    <property type="entry name" value="Ribosomal_bL20"/>
</dbReference>
<dbReference type="InterPro" id="IPR049946">
    <property type="entry name" value="RIBOSOMAL_L20_CS"/>
</dbReference>
<dbReference type="InterPro" id="IPR035566">
    <property type="entry name" value="Ribosomal_protein_bL20_C"/>
</dbReference>
<dbReference type="NCBIfam" id="TIGR01032">
    <property type="entry name" value="rplT_bact"/>
    <property type="match status" value="1"/>
</dbReference>
<dbReference type="PANTHER" id="PTHR10986">
    <property type="entry name" value="39S RIBOSOMAL PROTEIN L20"/>
    <property type="match status" value="1"/>
</dbReference>
<dbReference type="Pfam" id="PF00453">
    <property type="entry name" value="Ribosomal_L20"/>
    <property type="match status" value="1"/>
</dbReference>
<dbReference type="PRINTS" id="PR00062">
    <property type="entry name" value="RIBOSOMALL20"/>
</dbReference>
<dbReference type="SUPFAM" id="SSF74731">
    <property type="entry name" value="Ribosomal protein L20"/>
    <property type="match status" value="1"/>
</dbReference>
<dbReference type="PROSITE" id="PS00937">
    <property type="entry name" value="RIBOSOMAL_L20"/>
    <property type="match status" value="1"/>
</dbReference>
<sequence length="117" mass="14122">MTRIRRGYIARRRRTKIRLFTSSFRGAHSRLTRTMIQQKIKALFSAYRDRDRHKRNFRCLWVTRINAAIRENGVSYSYSTLINNLYKRQLLLNRKILAQLAILNRNCLYLISNDMIK</sequence>
<protein>
    <recommendedName>
        <fullName evidence="1">Large ribosomal subunit protein bL20c</fullName>
    </recommendedName>
    <alternativeName>
        <fullName evidence="2">50S ribosomal protein L20, chloroplastic</fullName>
    </alternativeName>
</protein>
<feature type="chain" id="PRO_0000355525" description="Large ribosomal subunit protein bL20c">
    <location>
        <begin position="1"/>
        <end position="117"/>
    </location>
</feature>